<evidence type="ECO:0000255" key="1"/>
<evidence type="ECO:0000255" key="2">
    <source>
        <dbReference type="PROSITE-ProRule" id="PRU00699"/>
    </source>
</evidence>
<feature type="signal peptide" evidence="1">
    <location>
        <begin position="1"/>
        <end position="21"/>
    </location>
</feature>
<feature type="chain" id="PRO_0000034034" description="Thaumatin-like pathogenesis-related protein 3">
    <location>
        <begin position="22"/>
        <end position="169"/>
    </location>
</feature>
<proteinExistence type="evidence at transcript level"/>
<keyword id="KW-0929">Antimicrobial</keyword>
<keyword id="KW-0295">Fungicide</keyword>
<keyword id="KW-0568">Pathogenesis-related protein</keyword>
<keyword id="KW-0611">Plant defense</keyword>
<keyword id="KW-0732">Signal</keyword>
<sequence>MATSSAVLFLLLAVFAAGASAATFRITNNCGFTVWPAGIPVGGGFQLNSKQSSNINVPAGTSAGRIWGRTGCSFNNGRGSCATGDCAGALSCTLSGQPATLAEYTIGGSQDFYDISVIDGYNLAMDFSCSTGVALKCRDSGCPDAYHHPNDVATHACNGNSNYQITFCP</sequence>
<reference key="1">
    <citation type="journal article" date="1996" name="Mol. Plant Microbe Interact.">
        <title>Isolation and expression of a host response gene family encoding thaumatin-like proteins in incompatible oat-stem rust fungus interactions.</title>
        <authorList>
            <person name="Lin K.C."/>
            <person name="Bushnell W.R."/>
            <person name="Szabo L.J."/>
            <person name="Smith A.G."/>
        </authorList>
    </citation>
    <scope>NUCLEOTIDE SEQUENCE [MRNA]</scope>
    <source>
        <strain>cv. Rodney</strain>
    </source>
</reference>
<accession>P50697</accession>
<name>RST3_AVESA</name>
<gene>
    <name type="primary">RASTL-3</name>
</gene>
<comment type="function">
    <text>Associated with resistance against stem rust fungi.</text>
</comment>
<comment type="similarity">
    <text evidence="2">Belongs to the thaumatin family.</text>
</comment>
<dbReference type="EMBL" id="L39776">
    <property type="protein sequence ID" value="AAB09226.1"/>
    <property type="molecule type" value="mRNA"/>
</dbReference>
<dbReference type="SMR" id="P50697"/>
<dbReference type="EnsemblPlants" id="AVESA.00001b.r3.3Cg0000443.1">
    <property type="protein sequence ID" value="cds.AVESA.00001b.r3.3Cg0000443.1"/>
    <property type="gene ID" value="AVESA.00001b.r3.3Cg0000443"/>
</dbReference>
<dbReference type="Gramene" id="AVESA.00001b.r3.3Cg0000443.1">
    <property type="protein sequence ID" value="cds.AVESA.00001b.r3.3Cg0000443.1"/>
    <property type="gene ID" value="AVESA.00001b.r3.3Cg0000443"/>
</dbReference>
<dbReference type="GO" id="GO:0050832">
    <property type="term" value="P:defense response to fungus"/>
    <property type="evidence" value="ECO:0007669"/>
    <property type="project" value="UniProtKB-KW"/>
</dbReference>
<dbReference type="GO" id="GO:0031640">
    <property type="term" value="P:killing of cells of another organism"/>
    <property type="evidence" value="ECO:0007669"/>
    <property type="project" value="UniProtKB-KW"/>
</dbReference>
<dbReference type="CDD" id="cd09217">
    <property type="entry name" value="TLP-P"/>
    <property type="match status" value="1"/>
</dbReference>
<dbReference type="Gene3D" id="2.60.110.10">
    <property type="entry name" value="Thaumatin"/>
    <property type="match status" value="1"/>
</dbReference>
<dbReference type="InterPro" id="IPR037176">
    <property type="entry name" value="Osmotin/thaumatin-like_sf"/>
</dbReference>
<dbReference type="InterPro" id="IPR001938">
    <property type="entry name" value="Thaumatin"/>
</dbReference>
<dbReference type="InterPro" id="IPR017949">
    <property type="entry name" value="Thaumatin_CS"/>
</dbReference>
<dbReference type="PANTHER" id="PTHR31048">
    <property type="entry name" value="OS03G0233200 PROTEIN"/>
    <property type="match status" value="1"/>
</dbReference>
<dbReference type="Pfam" id="PF00314">
    <property type="entry name" value="Thaumatin"/>
    <property type="match status" value="1"/>
</dbReference>
<dbReference type="PIRSF" id="PIRSF002703">
    <property type="entry name" value="Thaumatin"/>
    <property type="match status" value="1"/>
</dbReference>
<dbReference type="PRINTS" id="PR00347">
    <property type="entry name" value="THAUMATIN"/>
</dbReference>
<dbReference type="SMART" id="SM00205">
    <property type="entry name" value="THN"/>
    <property type="match status" value="1"/>
</dbReference>
<dbReference type="SUPFAM" id="SSF49870">
    <property type="entry name" value="Osmotin, thaumatin-like protein"/>
    <property type="match status" value="1"/>
</dbReference>
<dbReference type="PROSITE" id="PS00316">
    <property type="entry name" value="THAUMATIN_1"/>
    <property type="match status" value="1"/>
</dbReference>
<dbReference type="PROSITE" id="PS51367">
    <property type="entry name" value="THAUMATIN_2"/>
    <property type="match status" value="1"/>
</dbReference>
<organism>
    <name type="scientific">Avena sativa</name>
    <name type="common">Oat</name>
    <dbReference type="NCBI Taxonomy" id="4498"/>
    <lineage>
        <taxon>Eukaryota</taxon>
        <taxon>Viridiplantae</taxon>
        <taxon>Streptophyta</taxon>
        <taxon>Embryophyta</taxon>
        <taxon>Tracheophyta</taxon>
        <taxon>Spermatophyta</taxon>
        <taxon>Magnoliopsida</taxon>
        <taxon>Liliopsida</taxon>
        <taxon>Poales</taxon>
        <taxon>Poaceae</taxon>
        <taxon>BOP clade</taxon>
        <taxon>Pooideae</taxon>
        <taxon>Poodae</taxon>
        <taxon>Poeae</taxon>
        <taxon>Poeae Chloroplast Group 1 (Aveneae type)</taxon>
        <taxon>Aveninae</taxon>
        <taxon>Avena</taxon>
    </lineage>
</organism>
<protein>
    <recommendedName>
        <fullName>Thaumatin-like pathogenesis-related protein 3</fullName>
    </recommendedName>
</protein>